<reference key="1">
    <citation type="journal article" date="2008" name="Environ. Microbiol.">
        <title>The genome of Erwinia tasmaniensis strain Et1/99, a non-pathogenic bacterium in the genus Erwinia.</title>
        <authorList>
            <person name="Kube M."/>
            <person name="Migdoll A.M."/>
            <person name="Mueller I."/>
            <person name="Kuhl H."/>
            <person name="Beck A."/>
            <person name="Reinhardt R."/>
            <person name="Geider K."/>
        </authorList>
    </citation>
    <scope>NUCLEOTIDE SEQUENCE [LARGE SCALE GENOMIC DNA]</scope>
    <source>
        <strain>DSM 17950 / CFBP 7177 / CIP 109463 / NCPPB 4357 / Et1/99</strain>
    </source>
</reference>
<feature type="chain" id="PRO_1000139453" description="CTP synthase">
    <location>
        <begin position="1"/>
        <end position="545"/>
    </location>
</feature>
<feature type="domain" description="Glutamine amidotransferase type-1" evidence="1">
    <location>
        <begin position="291"/>
        <end position="542"/>
    </location>
</feature>
<feature type="region of interest" description="Amidoligase domain" evidence="1">
    <location>
        <begin position="1"/>
        <end position="266"/>
    </location>
</feature>
<feature type="active site" description="Nucleophile; for glutamine hydrolysis" evidence="1">
    <location>
        <position position="379"/>
    </location>
</feature>
<feature type="active site" evidence="1">
    <location>
        <position position="515"/>
    </location>
</feature>
<feature type="active site" evidence="1">
    <location>
        <position position="517"/>
    </location>
</feature>
<feature type="binding site" evidence="1">
    <location>
        <position position="14"/>
    </location>
    <ligand>
        <name>CTP</name>
        <dbReference type="ChEBI" id="CHEBI:37563"/>
        <note>allosteric inhibitor</note>
    </ligand>
</feature>
<feature type="binding site" evidence="1">
    <location>
        <position position="14"/>
    </location>
    <ligand>
        <name>UTP</name>
        <dbReference type="ChEBI" id="CHEBI:46398"/>
    </ligand>
</feature>
<feature type="binding site" evidence="1">
    <location>
        <begin position="15"/>
        <end position="20"/>
    </location>
    <ligand>
        <name>ATP</name>
        <dbReference type="ChEBI" id="CHEBI:30616"/>
    </ligand>
</feature>
<feature type="binding site" evidence="1">
    <location>
        <position position="72"/>
    </location>
    <ligand>
        <name>ATP</name>
        <dbReference type="ChEBI" id="CHEBI:30616"/>
    </ligand>
</feature>
<feature type="binding site" evidence="1">
    <location>
        <position position="72"/>
    </location>
    <ligand>
        <name>Mg(2+)</name>
        <dbReference type="ChEBI" id="CHEBI:18420"/>
    </ligand>
</feature>
<feature type="binding site" evidence="1">
    <location>
        <position position="140"/>
    </location>
    <ligand>
        <name>Mg(2+)</name>
        <dbReference type="ChEBI" id="CHEBI:18420"/>
    </ligand>
</feature>
<feature type="binding site" evidence="1">
    <location>
        <begin position="147"/>
        <end position="149"/>
    </location>
    <ligand>
        <name>CTP</name>
        <dbReference type="ChEBI" id="CHEBI:37563"/>
        <note>allosteric inhibitor</note>
    </ligand>
</feature>
<feature type="binding site" evidence="1">
    <location>
        <begin position="187"/>
        <end position="192"/>
    </location>
    <ligand>
        <name>CTP</name>
        <dbReference type="ChEBI" id="CHEBI:37563"/>
        <note>allosteric inhibitor</note>
    </ligand>
</feature>
<feature type="binding site" evidence="1">
    <location>
        <begin position="187"/>
        <end position="192"/>
    </location>
    <ligand>
        <name>UTP</name>
        <dbReference type="ChEBI" id="CHEBI:46398"/>
    </ligand>
</feature>
<feature type="binding site" evidence="1">
    <location>
        <position position="223"/>
    </location>
    <ligand>
        <name>CTP</name>
        <dbReference type="ChEBI" id="CHEBI:37563"/>
        <note>allosteric inhibitor</note>
    </ligand>
</feature>
<feature type="binding site" evidence="1">
    <location>
        <position position="223"/>
    </location>
    <ligand>
        <name>UTP</name>
        <dbReference type="ChEBI" id="CHEBI:46398"/>
    </ligand>
</feature>
<feature type="binding site" evidence="1">
    <location>
        <begin position="239"/>
        <end position="241"/>
    </location>
    <ligand>
        <name>ATP</name>
        <dbReference type="ChEBI" id="CHEBI:30616"/>
    </ligand>
</feature>
<feature type="binding site" evidence="1">
    <location>
        <position position="352"/>
    </location>
    <ligand>
        <name>L-glutamine</name>
        <dbReference type="ChEBI" id="CHEBI:58359"/>
    </ligand>
</feature>
<feature type="binding site" evidence="1">
    <location>
        <begin position="380"/>
        <end position="383"/>
    </location>
    <ligand>
        <name>L-glutamine</name>
        <dbReference type="ChEBI" id="CHEBI:58359"/>
    </ligand>
</feature>
<feature type="binding site" evidence="1">
    <location>
        <position position="403"/>
    </location>
    <ligand>
        <name>L-glutamine</name>
        <dbReference type="ChEBI" id="CHEBI:58359"/>
    </ligand>
</feature>
<feature type="binding site" evidence="1">
    <location>
        <position position="470"/>
    </location>
    <ligand>
        <name>L-glutamine</name>
        <dbReference type="ChEBI" id="CHEBI:58359"/>
    </ligand>
</feature>
<keyword id="KW-0067">ATP-binding</keyword>
<keyword id="KW-0315">Glutamine amidotransferase</keyword>
<keyword id="KW-0436">Ligase</keyword>
<keyword id="KW-0460">Magnesium</keyword>
<keyword id="KW-0479">Metal-binding</keyword>
<keyword id="KW-0547">Nucleotide-binding</keyword>
<keyword id="KW-0665">Pyrimidine biosynthesis</keyword>
<keyword id="KW-1185">Reference proteome</keyword>
<protein>
    <recommendedName>
        <fullName evidence="1">CTP synthase</fullName>
        <ecNumber evidence="1">6.3.4.2</ecNumber>
    </recommendedName>
    <alternativeName>
        <fullName evidence="1">Cytidine 5'-triphosphate synthase</fullName>
    </alternativeName>
    <alternativeName>
        <fullName evidence="1">Cytidine triphosphate synthetase</fullName>
        <shortName evidence="1">CTP synthetase</shortName>
        <shortName evidence="1">CTPS</shortName>
    </alternativeName>
    <alternativeName>
        <fullName evidence="1">UTP--ammonia ligase</fullName>
    </alternativeName>
</protein>
<organism>
    <name type="scientific">Erwinia tasmaniensis (strain DSM 17950 / CFBP 7177 / CIP 109463 / NCPPB 4357 / Et1/99)</name>
    <dbReference type="NCBI Taxonomy" id="465817"/>
    <lineage>
        <taxon>Bacteria</taxon>
        <taxon>Pseudomonadati</taxon>
        <taxon>Pseudomonadota</taxon>
        <taxon>Gammaproteobacteria</taxon>
        <taxon>Enterobacterales</taxon>
        <taxon>Erwiniaceae</taxon>
        <taxon>Erwinia</taxon>
    </lineage>
</organism>
<dbReference type="EC" id="6.3.4.2" evidence="1"/>
<dbReference type="EMBL" id="CU468135">
    <property type="protein sequence ID" value="CAO97767.1"/>
    <property type="molecule type" value="Genomic_DNA"/>
</dbReference>
<dbReference type="RefSeq" id="WP_012442424.1">
    <property type="nucleotide sequence ID" value="NC_010694.1"/>
</dbReference>
<dbReference type="SMR" id="B2VFY9"/>
<dbReference type="STRING" id="465817.ETA_27210"/>
<dbReference type="MEROPS" id="C26.964"/>
<dbReference type="KEGG" id="eta:ETA_27210"/>
<dbReference type="eggNOG" id="COG0504">
    <property type="taxonomic scope" value="Bacteria"/>
</dbReference>
<dbReference type="HOGENOM" id="CLU_011675_5_0_6"/>
<dbReference type="OrthoDB" id="9801107at2"/>
<dbReference type="UniPathway" id="UPA00159">
    <property type="reaction ID" value="UER00277"/>
</dbReference>
<dbReference type="Proteomes" id="UP000001726">
    <property type="component" value="Chromosome"/>
</dbReference>
<dbReference type="GO" id="GO:0005829">
    <property type="term" value="C:cytosol"/>
    <property type="evidence" value="ECO:0007669"/>
    <property type="project" value="TreeGrafter"/>
</dbReference>
<dbReference type="GO" id="GO:0005524">
    <property type="term" value="F:ATP binding"/>
    <property type="evidence" value="ECO:0007669"/>
    <property type="project" value="UniProtKB-KW"/>
</dbReference>
<dbReference type="GO" id="GO:0003883">
    <property type="term" value="F:CTP synthase activity"/>
    <property type="evidence" value="ECO:0007669"/>
    <property type="project" value="UniProtKB-UniRule"/>
</dbReference>
<dbReference type="GO" id="GO:0004359">
    <property type="term" value="F:glutaminase activity"/>
    <property type="evidence" value="ECO:0007669"/>
    <property type="project" value="RHEA"/>
</dbReference>
<dbReference type="GO" id="GO:0042802">
    <property type="term" value="F:identical protein binding"/>
    <property type="evidence" value="ECO:0007669"/>
    <property type="project" value="TreeGrafter"/>
</dbReference>
<dbReference type="GO" id="GO:0046872">
    <property type="term" value="F:metal ion binding"/>
    <property type="evidence" value="ECO:0007669"/>
    <property type="project" value="UniProtKB-KW"/>
</dbReference>
<dbReference type="GO" id="GO:0044210">
    <property type="term" value="P:'de novo' CTP biosynthetic process"/>
    <property type="evidence" value="ECO:0007669"/>
    <property type="project" value="UniProtKB-UniRule"/>
</dbReference>
<dbReference type="GO" id="GO:0019856">
    <property type="term" value="P:pyrimidine nucleobase biosynthetic process"/>
    <property type="evidence" value="ECO:0007669"/>
    <property type="project" value="TreeGrafter"/>
</dbReference>
<dbReference type="CDD" id="cd03113">
    <property type="entry name" value="CTPS_N"/>
    <property type="match status" value="1"/>
</dbReference>
<dbReference type="CDD" id="cd01746">
    <property type="entry name" value="GATase1_CTP_Synthase"/>
    <property type="match status" value="1"/>
</dbReference>
<dbReference type="FunFam" id="3.40.50.300:FF:000009">
    <property type="entry name" value="CTP synthase"/>
    <property type="match status" value="1"/>
</dbReference>
<dbReference type="FunFam" id="3.40.50.880:FF:000002">
    <property type="entry name" value="CTP synthase"/>
    <property type="match status" value="1"/>
</dbReference>
<dbReference type="Gene3D" id="3.40.50.880">
    <property type="match status" value="1"/>
</dbReference>
<dbReference type="Gene3D" id="3.40.50.300">
    <property type="entry name" value="P-loop containing nucleotide triphosphate hydrolases"/>
    <property type="match status" value="1"/>
</dbReference>
<dbReference type="HAMAP" id="MF_01227">
    <property type="entry name" value="PyrG"/>
    <property type="match status" value="1"/>
</dbReference>
<dbReference type="InterPro" id="IPR029062">
    <property type="entry name" value="Class_I_gatase-like"/>
</dbReference>
<dbReference type="InterPro" id="IPR004468">
    <property type="entry name" value="CTP_synthase"/>
</dbReference>
<dbReference type="InterPro" id="IPR017456">
    <property type="entry name" value="CTP_synthase_N"/>
</dbReference>
<dbReference type="InterPro" id="IPR017926">
    <property type="entry name" value="GATASE"/>
</dbReference>
<dbReference type="InterPro" id="IPR033828">
    <property type="entry name" value="GATase1_CTP_Synthase"/>
</dbReference>
<dbReference type="InterPro" id="IPR027417">
    <property type="entry name" value="P-loop_NTPase"/>
</dbReference>
<dbReference type="NCBIfam" id="NF003792">
    <property type="entry name" value="PRK05380.1"/>
    <property type="match status" value="1"/>
</dbReference>
<dbReference type="NCBIfam" id="TIGR00337">
    <property type="entry name" value="PyrG"/>
    <property type="match status" value="1"/>
</dbReference>
<dbReference type="PANTHER" id="PTHR11550">
    <property type="entry name" value="CTP SYNTHASE"/>
    <property type="match status" value="1"/>
</dbReference>
<dbReference type="PANTHER" id="PTHR11550:SF0">
    <property type="entry name" value="CTP SYNTHASE-RELATED"/>
    <property type="match status" value="1"/>
</dbReference>
<dbReference type="Pfam" id="PF06418">
    <property type="entry name" value="CTP_synth_N"/>
    <property type="match status" value="1"/>
</dbReference>
<dbReference type="Pfam" id="PF00117">
    <property type="entry name" value="GATase"/>
    <property type="match status" value="1"/>
</dbReference>
<dbReference type="SUPFAM" id="SSF52317">
    <property type="entry name" value="Class I glutamine amidotransferase-like"/>
    <property type="match status" value="1"/>
</dbReference>
<dbReference type="SUPFAM" id="SSF52540">
    <property type="entry name" value="P-loop containing nucleoside triphosphate hydrolases"/>
    <property type="match status" value="1"/>
</dbReference>
<dbReference type="PROSITE" id="PS51273">
    <property type="entry name" value="GATASE_TYPE_1"/>
    <property type="match status" value="1"/>
</dbReference>
<sequence>MTTNYIFVTGGVVSSLGKGIAAASLAAILEARGLKVTIMKLDPYINVDPGTMSPTQHGEVFVTDDGAETDLDLGHYERFIRTRMSRRNNFTTGRIYSEVLRKERRGDYLGATIQVIPHITNAIKERIIEGGEGHDVVLVEIGGTVGDIESLPFLEAIRQMAVDVGREHTMYMHLTLVPYMAAAGEVKTKPTQHSVKELLSIGIQPDVLICRSDRAVPANERAKIALFCNVPEKAVISLKDVDSIYKIPGMLKSQGLDDYICKRFSLNAPEANLQEWEQVIYQEANPGGEVNIGMVGKYVELPDAYKSVIEALKHGGLKNRVTVNIKLIDSQDVETRGVELLKDLDAILIPGGFGYRGVEGKLMTAQYARENNIPYLGICLGMQVALMEFARNVAHMEGANSTEFVPDCKYPVVALITEWRDEEGNVEQRSEQSDLGGTMRLGSQQCQLTDGSLVRQLYGSDTIVERHRHRYEVNNMLLKQIEAAGLRVAGRSGDDQLVEIVEIPNHPWFVACQFHPEFTSTPRDGHPLFSGFVKAASEYQKRLAK</sequence>
<accession>B2VFY9</accession>
<name>PYRG_ERWT9</name>
<proteinExistence type="inferred from homology"/>
<gene>
    <name evidence="1" type="primary">pyrG</name>
    <name type="ordered locus">ETA_27210</name>
</gene>
<evidence type="ECO:0000255" key="1">
    <source>
        <dbReference type="HAMAP-Rule" id="MF_01227"/>
    </source>
</evidence>
<comment type="function">
    <text evidence="1">Catalyzes the ATP-dependent amination of UTP to CTP with either L-glutamine or ammonia as the source of nitrogen. Regulates intracellular CTP levels through interactions with the four ribonucleotide triphosphates.</text>
</comment>
<comment type="catalytic activity">
    <reaction evidence="1">
        <text>UTP + L-glutamine + ATP + H2O = CTP + L-glutamate + ADP + phosphate + 2 H(+)</text>
        <dbReference type="Rhea" id="RHEA:26426"/>
        <dbReference type="ChEBI" id="CHEBI:15377"/>
        <dbReference type="ChEBI" id="CHEBI:15378"/>
        <dbReference type="ChEBI" id="CHEBI:29985"/>
        <dbReference type="ChEBI" id="CHEBI:30616"/>
        <dbReference type="ChEBI" id="CHEBI:37563"/>
        <dbReference type="ChEBI" id="CHEBI:43474"/>
        <dbReference type="ChEBI" id="CHEBI:46398"/>
        <dbReference type="ChEBI" id="CHEBI:58359"/>
        <dbReference type="ChEBI" id="CHEBI:456216"/>
        <dbReference type="EC" id="6.3.4.2"/>
    </reaction>
</comment>
<comment type="catalytic activity">
    <reaction evidence="1">
        <text>L-glutamine + H2O = L-glutamate + NH4(+)</text>
        <dbReference type="Rhea" id="RHEA:15889"/>
        <dbReference type="ChEBI" id="CHEBI:15377"/>
        <dbReference type="ChEBI" id="CHEBI:28938"/>
        <dbReference type="ChEBI" id="CHEBI:29985"/>
        <dbReference type="ChEBI" id="CHEBI:58359"/>
    </reaction>
</comment>
<comment type="catalytic activity">
    <reaction evidence="1">
        <text>UTP + NH4(+) + ATP = CTP + ADP + phosphate + 2 H(+)</text>
        <dbReference type="Rhea" id="RHEA:16597"/>
        <dbReference type="ChEBI" id="CHEBI:15378"/>
        <dbReference type="ChEBI" id="CHEBI:28938"/>
        <dbReference type="ChEBI" id="CHEBI:30616"/>
        <dbReference type="ChEBI" id="CHEBI:37563"/>
        <dbReference type="ChEBI" id="CHEBI:43474"/>
        <dbReference type="ChEBI" id="CHEBI:46398"/>
        <dbReference type="ChEBI" id="CHEBI:456216"/>
    </reaction>
</comment>
<comment type="activity regulation">
    <text evidence="1">Allosterically activated by GTP, when glutamine is the substrate; GTP has no effect on the reaction when ammonia is the substrate. The allosteric effector GTP functions by stabilizing the protein conformation that binds the tetrahedral intermediate(s) formed during glutamine hydrolysis. Inhibited by the product CTP, via allosteric rather than competitive inhibition.</text>
</comment>
<comment type="pathway">
    <text evidence="1">Pyrimidine metabolism; CTP biosynthesis via de novo pathway; CTP from UDP: step 2/2.</text>
</comment>
<comment type="subunit">
    <text evidence="1">Homotetramer.</text>
</comment>
<comment type="miscellaneous">
    <text evidence="1">CTPSs have evolved a hybrid strategy for distinguishing between UTP and CTP. The overlapping regions of the product feedback inhibitory and substrate sites recognize a common feature in both compounds, the triphosphate moiety. To differentiate isosteric substrate and product pyrimidine rings, an additional pocket far from the expected kinase/ligase catalytic site, specifically recognizes the cytosine and ribose portions of the product inhibitor.</text>
</comment>
<comment type="similarity">
    <text evidence="1">Belongs to the CTP synthase family.</text>
</comment>